<organism>
    <name type="scientific">Arabidopsis thaliana</name>
    <name type="common">Mouse-ear cress</name>
    <dbReference type="NCBI Taxonomy" id="3702"/>
    <lineage>
        <taxon>Eukaryota</taxon>
        <taxon>Viridiplantae</taxon>
        <taxon>Streptophyta</taxon>
        <taxon>Embryophyta</taxon>
        <taxon>Tracheophyta</taxon>
        <taxon>Spermatophyta</taxon>
        <taxon>Magnoliopsida</taxon>
        <taxon>eudicotyledons</taxon>
        <taxon>Gunneridae</taxon>
        <taxon>Pentapetalae</taxon>
        <taxon>rosids</taxon>
        <taxon>malvids</taxon>
        <taxon>Brassicales</taxon>
        <taxon>Brassicaceae</taxon>
        <taxon>Camelineae</taxon>
        <taxon>Arabidopsis</taxon>
    </lineage>
</organism>
<dbReference type="EC" id="1.13.11.58" evidence="5"/>
<dbReference type="EMBL" id="AB022215">
    <property type="protein sequence ID" value="BAB01777.1"/>
    <property type="status" value="ALT_SEQ"/>
    <property type="molecule type" value="Genomic_DNA"/>
</dbReference>
<dbReference type="EMBL" id="CP002686">
    <property type="protein sequence ID" value="AEE76630.1"/>
    <property type="molecule type" value="Genomic_DNA"/>
</dbReference>
<dbReference type="EMBL" id="AJ302043">
    <property type="protein sequence ID" value="CAC19365.1"/>
    <property type="molecule type" value="mRNA"/>
</dbReference>
<dbReference type="RefSeq" id="NP_188879.2">
    <property type="nucleotide sequence ID" value="NM_113137.4"/>
</dbReference>
<dbReference type="SMR" id="Q9LUW0"/>
<dbReference type="FunCoup" id="Q9LUW0">
    <property type="interactions" value="83"/>
</dbReference>
<dbReference type="STRING" id="3702.Q9LUW0"/>
<dbReference type="SwissLipids" id="SLP:000001764"/>
<dbReference type="iPTMnet" id="Q9LUW0"/>
<dbReference type="PaxDb" id="3702-AT3G22400.1"/>
<dbReference type="ProteomicsDB" id="238484"/>
<dbReference type="EnsemblPlants" id="AT3G22400.1">
    <property type="protein sequence ID" value="AT3G22400.1"/>
    <property type="gene ID" value="AT3G22400"/>
</dbReference>
<dbReference type="GeneID" id="821808"/>
<dbReference type="Gramene" id="AT3G22400.1">
    <property type="protein sequence ID" value="AT3G22400.1"/>
    <property type="gene ID" value="AT3G22400"/>
</dbReference>
<dbReference type="KEGG" id="ath:AT3G22400"/>
<dbReference type="Araport" id="AT3G22400"/>
<dbReference type="TAIR" id="AT3G22400">
    <property type="gene designation" value="LOX5"/>
</dbReference>
<dbReference type="eggNOG" id="ENOG502QQSP">
    <property type="taxonomic scope" value="Eukaryota"/>
</dbReference>
<dbReference type="HOGENOM" id="CLU_004282_0_0_1"/>
<dbReference type="InParanoid" id="Q9LUW0"/>
<dbReference type="OMA" id="HRYTHDR"/>
<dbReference type="PhylomeDB" id="Q9LUW0"/>
<dbReference type="BRENDA" id="1.13.11.58">
    <property type="organism ID" value="399"/>
</dbReference>
<dbReference type="UniPathway" id="UPA00382"/>
<dbReference type="PRO" id="PR:Q9LUW0"/>
<dbReference type="Proteomes" id="UP000006548">
    <property type="component" value="Chromosome 3"/>
</dbReference>
<dbReference type="ExpressionAtlas" id="Q9LUW0">
    <property type="expression patterns" value="baseline and differential"/>
</dbReference>
<dbReference type="GO" id="GO:1990136">
    <property type="term" value="F:linoleate 9S-lipoxygenase activity"/>
    <property type="evidence" value="ECO:0000314"/>
    <property type="project" value="UniProtKB"/>
</dbReference>
<dbReference type="GO" id="GO:0046872">
    <property type="term" value="F:metal ion binding"/>
    <property type="evidence" value="ECO:0007669"/>
    <property type="project" value="UniProtKB-KW"/>
</dbReference>
<dbReference type="GO" id="GO:0006952">
    <property type="term" value="P:defense response"/>
    <property type="evidence" value="ECO:0007669"/>
    <property type="project" value="UniProtKB-KW"/>
</dbReference>
<dbReference type="GO" id="GO:0006633">
    <property type="term" value="P:fatty acid biosynthetic process"/>
    <property type="evidence" value="ECO:0007669"/>
    <property type="project" value="UniProtKB-KW"/>
</dbReference>
<dbReference type="GO" id="GO:0010311">
    <property type="term" value="P:lateral root formation"/>
    <property type="evidence" value="ECO:0000315"/>
    <property type="project" value="UniProtKB"/>
</dbReference>
<dbReference type="GO" id="GO:0034440">
    <property type="term" value="P:lipid oxidation"/>
    <property type="evidence" value="ECO:0000314"/>
    <property type="project" value="TAIR"/>
</dbReference>
<dbReference type="GO" id="GO:1900366">
    <property type="term" value="P:negative regulation of defense response to insect"/>
    <property type="evidence" value="ECO:0000315"/>
    <property type="project" value="TAIR"/>
</dbReference>
<dbReference type="GO" id="GO:0031408">
    <property type="term" value="P:oxylipin biosynthetic process"/>
    <property type="evidence" value="ECO:0007669"/>
    <property type="project" value="UniProtKB-UniPathway"/>
</dbReference>
<dbReference type="GO" id="GO:0048364">
    <property type="term" value="P:root development"/>
    <property type="evidence" value="ECO:0000315"/>
    <property type="project" value="TAIR"/>
</dbReference>
<dbReference type="CDD" id="cd01751">
    <property type="entry name" value="PLAT_LH2"/>
    <property type="match status" value="1"/>
</dbReference>
<dbReference type="FunFam" id="1.20.245.10:FF:000002">
    <property type="entry name" value="Lipoxygenase"/>
    <property type="match status" value="1"/>
</dbReference>
<dbReference type="FunFam" id="3.10.450.60:FF:000002">
    <property type="entry name" value="Lipoxygenase"/>
    <property type="match status" value="1"/>
</dbReference>
<dbReference type="FunFam" id="4.10.372.10:FF:000001">
    <property type="entry name" value="Lipoxygenase"/>
    <property type="match status" value="1"/>
</dbReference>
<dbReference type="FunFam" id="4.10.375.10:FF:000001">
    <property type="entry name" value="Lipoxygenase"/>
    <property type="match status" value="1"/>
</dbReference>
<dbReference type="Gene3D" id="3.10.450.60">
    <property type="match status" value="1"/>
</dbReference>
<dbReference type="Gene3D" id="4.10.375.10">
    <property type="entry name" value="Lipoxygenase-1, Domain 2"/>
    <property type="match status" value="1"/>
</dbReference>
<dbReference type="Gene3D" id="4.10.372.10">
    <property type="entry name" value="Lipoxygenase-1, Domain 3"/>
    <property type="match status" value="1"/>
</dbReference>
<dbReference type="Gene3D" id="1.20.245.10">
    <property type="entry name" value="Lipoxygenase-1, Domain 5"/>
    <property type="match status" value="1"/>
</dbReference>
<dbReference type="Gene3D" id="2.60.60.20">
    <property type="entry name" value="PLAT/LH2 domain"/>
    <property type="match status" value="1"/>
</dbReference>
<dbReference type="InterPro" id="IPR000907">
    <property type="entry name" value="LipOase"/>
</dbReference>
<dbReference type="InterPro" id="IPR013819">
    <property type="entry name" value="LipOase_C"/>
</dbReference>
<dbReference type="InterPro" id="IPR036226">
    <property type="entry name" value="LipOase_C_sf"/>
</dbReference>
<dbReference type="InterPro" id="IPR020834">
    <property type="entry name" value="LipOase_CS"/>
</dbReference>
<dbReference type="InterPro" id="IPR020833">
    <property type="entry name" value="LipOase_Fe_BS"/>
</dbReference>
<dbReference type="InterPro" id="IPR001246">
    <property type="entry name" value="LipOase_plant"/>
</dbReference>
<dbReference type="InterPro" id="IPR042057">
    <property type="entry name" value="Lipoxy_PLAT/LH2"/>
</dbReference>
<dbReference type="InterPro" id="IPR027433">
    <property type="entry name" value="Lipoxygenase_dom_3"/>
</dbReference>
<dbReference type="InterPro" id="IPR001024">
    <property type="entry name" value="PLAT/LH2_dom"/>
</dbReference>
<dbReference type="InterPro" id="IPR036392">
    <property type="entry name" value="PLAT/LH2_dom_sf"/>
</dbReference>
<dbReference type="PANTHER" id="PTHR11771">
    <property type="entry name" value="LIPOXYGENASE"/>
    <property type="match status" value="1"/>
</dbReference>
<dbReference type="Pfam" id="PF00305">
    <property type="entry name" value="Lipoxygenase"/>
    <property type="match status" value="1"/>
</dbReference>
<dbReference type="Pfam" id="PF01477">
    <property type="entry name" value="PLAT"/>
    <property type="match status" value="1"/>
</dbReference>
<dbReference type="PRINTS" id="PR00087">
    <property type="entry name" value="LIPOXYGENASE"/>
</dbReference>
<dbReference type="PRINTS" id="PR00468">
    <property type="entry name" value="PLTLPOXGNASE"/>
</dbReference>
<dbReference type="SMART" id="SM00308">
    <property type="entry name" value="LH2"/>
    <property type="match status" value="1"/>
</dbReference>
<dbReference type="SUPFAM" id="SSF49723">
    <property type="entry name" value="Lipase/lipooxygenase domain (PLAT/LH2 domain)"/>
    <property type="match status" value="1"/>
</dbReference>
<dbReference type="SUPFAM" id="SSF48484">
    <property type="entry name" value="Lipoxigenase"/>
    <property type="match status" value="1"/>
</dbReference>
<dbReference type="PROSITE" id="PS00711">
    <property type="entry name" value="LIPOXYGENASE_1"/>
    <property type="match status" value="1"/>
</dbReference>
<dbReference type="PROSITE" id="PS00081">
    <property type="entry name" value="LIPOXYGENASE_2"/>
    <property type="match status" value="1"/>
</dbReference>
<dbReference type="PROSITE" id="PS51393">
    <property type="entry name" value="LIPOXYGENASE_3"/>
    <property type="match status" value="1"/>
</dbReference>
<dbReference type="PROSITE" id="PS50095">
    <property type="entry name" value="PLAT"/>
    <property type="match status" value="1"/>
</dbReference>
<feature type="chain" id="PRO_0000380594" description="Linoleate 9S-lipoxygenase 5">
    <location>
        <begin position="1"/>
        <end position="886"/>
    </location>
</feature>
<feature type="domain" description="PLAT" evidence="1">
    <location>
        <begin position="35"/>
        <end position="180"/>
    </location>
</feature>
<feature type="domain" description="Lipoxygenase" evidence="2">
    <location>
        <begin position="183"/>
        <end position="886"/>
    </location>
</feature>
<feature type="region of interest" description="Disordered" evidence="3">
    <location>
        <begin position="234"/>
        <end position="266"/>
    </location>
</feature>
<feature type="binding site" evidence="2">
    <location>
        <position position="542"/>
    </location>
    <ligand>
        <name>Fe cation</name>
        <dbReference type="ChEBI" id="CHEBI:24875"/>
        <note>catalytic</note>
    </ligand>
</feature>
<feature type="binding site" evidence="2">
    <location>
        <position position="547"/>
    </location>
    <ligand>
        <name>Fe cation</name>
        <dbReference type="ChEBI" id="CHEBI:24875"/>
        <note>catalytic</note>
    </ligand>
</feature>
<feature type="binding site" evidence="2">
    <location>
        <position position="733"/>
    </location>
    <ligand>
        <name>Fe cation</name>
        <dbReference type="ChEBI" id="CHEBI:24875"/>
        <note>catalytic</note>
    </ligand>
</feature>
<feature type="binding site" evidence="2">
    <location>
        <position position="737"/>
    </location>
    <ligand>
        <name>Fe cation</name>
        <dbReference type="ChEBI" id="CHEBI:24875"/>
        <note>catalytic</note>
    </ligand>
</feature>
<feature type="binding site" evidence="2">
    <location>
        <position position="886"/>
    </location>
    <ligand>
        <name>Fe cation</name>
        <dbReference type="ChEBI" id="CHEBI:24875"/>
        <note>catalytic</note>
    </ligand>
</feature>
<evidence type="ECO:0000255" key="1">
    <source>
        <dbReference type="PROSITE-ProRule" id="PRU00152"/>
    </source>
</evidence>
<evidence type="ECO:0000255" key="2">
    <source>
        <dbReference type="PROSITE-ProRule" id="PRU00726"/>
    </source>
</evidence>
<evidence type="ECO:0000256" key="3">
    <source>
        <dbReference type="SAM" id="MobiDB-lite"/>
    </source>
</evidence>
<evidence type="ECO:0000269" key="4">
    <source>
    </source>
</evidence>
<evidence type="ECO:0000269" key="5">
    <source>
    </source>
</evidence>
<evidence type="ECO:0000269" key="6">
    <source>
    </source>
</evidence>
<evidence type="ECO:0000269" key="7">
    <source>
    </source>
</evidence>
<evidence type="ECO:0000269" key="8">
    <source>
    </source>
</evidence>
<evidence type="ECO:0000269" key="9">
    <source>
    </source>
</evidence>
<evidence type="ECO:0000269" key="10">
    <source>
    </source>
</evidence>
<evidence type="ECO:0000303" key="11">
    <source>
    </source>
</evidence>
<evidence type="ECO:0000303" key="12">
    <source>
    </source>
</evidence>
<evidence type="ECO:0000305" key="13"/>
<evidence type="ECO:0000312" key="14">
    <source>
        <dbReference type="Araport" id="AT3G22400"/>
    </source>
</evidence>
<evidence type="ECO:0000312" key="15">
    <source>
        <dbReference type="EMBL" id="BAB01777.1"/>
    </source>
</evidence>
<name>LOX5_ARATH</name>
<keyword id="KW-0223">Dioxygenase</keyword>
<keyword id="KW-0275">Fatty acid biosynthesis</keyword>
<keyword id="KW-0276">Fatty acid metabolism</keyword>
<keyword id="KW-0408">Iron</keyword>
<keyword id="KW-0444">Lipid biosynthesis</keyword>
<keyword id="KW-0443">Lipid metabolism</keyword>
<keyword id="KW-0479">Metal-binding</keyword>
<keyword id="KW-0560">Oxidoreductase</keyword>
<keyword id="KW-0925">Oxylipin biosynthesis</keyword>
<keyword id="KW-0611">Plant defense</keyword>
<keyword id="KW-1185">Reference proteome</keyword>
<keyword id="KW-0346">Stress response</keyword>
<reference key="1">
    <citation type="journal article" date="2000" name="DNA Res.">
        <title>Structural analysis of Arabidopsis thaliana chromosome 3. I. Sequence features of the regions of 4,504,864 bp covered by sixty P1 and TAC clones.</title>
        <authorList>
            <person name="Sato S."/>
            <person name="Nakamura Y."/>
            <person name="Kaneko T."/>
            <person name="Katoh T."/>
            <person name="Asamizu E."/>
            <person name="Tabata S."/>
        </authorList>
    </citation>
    <scope>NUCLEOTIDE SEQUENCE [LARGE SCALE GENOMIC DNA]</scope>
    <source>
        <strain>cv. Columbia</strain>
    </source>
</reference>
<reference key="2">
    <citation type="journal article" date="2017" name="Plant J.">
        <title>Araport11: a complete reannotation of the Arabidopsis thaliana reference genome.</title>
        <authorList>
            <person name="Cheng C.Y."/>
            <person name="Krishnakumar V."/>
            <person name="Chan A.P."/>
            <person name="Thibaud-Nissen F."/>
            <person name="Schobel S."/>
            <person name="Town C.D."/>
        </authorList>
    </citation>
    <scope>GENOME REANNOTATION</scope>
    <source>
        <strain>cv. Columbia</strain>
    </source>
</reference>
<reference key="3">
    <citation type="submission" date="2000-12" db="EMBL/GenBank/DDBJ databases">
        <title>AtLOX5, the second 9-LOX of Arabidopsis.</title>
        <authorList>
            <person name="Kunze S."/>
            <person name="Fritsche K."/>
            <person name="Feussner I."/>
        </authorList>
    </citation>
    <scope>NUCLEOTIDE SEQUENCE [MRNA] OF 33-886</scope>
</reference>
<reference key="4">
    <citation type="journal article" date="2007" name="Plant Cell">
        <title>Oxylipins produced by the 9-lipoxygenase pathway in Arabidopsis regulate lateral root development and defense responses through a specific signaling cascade.</title>
        <authorList>
            <person name="Vellosillo T."/>
            <person name="Martinez M."/>
            <person name="Lopez M.A."/>
            <person name="Vicente J."/>
            <person name="Cascon T."/>
            <person name="Dolan L."/>
            <person name="Hamberg M."/>
            <person name="Castresana C."/>
        </authorList>
    </citation>
    <scope>FUNCTION</scope>
    <scope>DISRUPTION PHENOTYPE</scope>
    <scope>TISSUE SPECIFICITY</scope>
    <scope>DEVELOPMENTAL STAGE</scope>
</reference>
<reference key="5">
    <citation type="journal article" date="2009" name="Lipids">
        <title>Diversity of the enzymatic activity in the lipoxygenase gene family of Arabidopsis thaliana.</title>
        <authorList>
            <person name="Bannenberg G."/>
            <person name="Martinez M."/>
            <person name="Hamberg M."/>
            <person name="Castresana C."/>
        </authorList>
    </citation>
    <scope>FUNCTION</scope>
    <scope>CATALYTIC ACTIVITY</scope>
</reference>
<reference key="6">
    <citation type="journal article" date="2011" name="Plant J.">
        <title>Antagonistic role of 9-lipoxygenase-derived oxylipins and ethylene in the control of oxidative stress, lipid peroxidation and plant defence.</title>
        <authorList>
            <person name="Lopez M.A."/>
            <person name="Vicente J."/>
            <person name="Kulasekaran S."/>
            <person name="Vellosillo T."/>
            <person name="Martinez M."/>
            <person name="Irigoyen M.L."/>
            <person name="Cascon T."/>
            <person name="Bannenberg G."/>
            <person name="Hamberg M."/>
            <person name="Castresana C."/>
        </authorList>
    </citation>
    <scope>FUNCTION</scope>
</reference>
<reference key="7">
    <citation type="journal article" date="2012" name="Plant Cell">
        <title>Root-derived oxylipins promote green peach aphid performance on Arabidopsis foliage.</title>
        <authorList>
            <person name="Nalam V.J."/>
            <person name="Keeretaweep J."/>
            <person name="Sarowar S."/>
            <person name="Shah J."/>
        </authorList>
    </citation>
    <scope>INDUCTION BY GREEN PEACH APHID</scope>
    <scope>DISRUPTION PHENOTYPE</scope>
</reference>
<reference key="8">
    <citation type="journal article" date="2015" name="Mol. Plant Microbe Interact.">
        <title>Facilitation of Fusarium graminearum infection by 9-lipoxygenases in Arabidopsis and wheat.</title>
        <authorList>
            <person name="Nalam V.J."/>
            <person name="Alam S."/>
            <person name="Keereetaweep J."/>
            <person name="Venables B."/>
            <person name="Burdan D."/>
            <person name="Lee H."/>
            <person name="Trick H.N."/>
            <person name="Sarowar S."/>
            <person name="Makandar R."/>
            <person name="Shah J."/>
        </authorList>
    </citation>
    <scope>FUNCTION</scope>
    <scope>INDUCTION BY FUSARIUM GRAMINEARUM</scope>
    <scope>DISRUPTION PHENOTYPE</scope>
</reference>
<reference key="9">
    <citation type="journal article" date="2015" name="Plant Physiol.">
        <title>9-Lipoxygenase-derived oxylipins activate brassinosteroid signaling to promote cell wall-based defense and limit pathogen infection.</title>
        <authorList>
            <person name="Marcos R."/>
            <person name="Izquierdo Y."/>
            <person name="Vellosillo T."/>
            <person name="Kulasekaran S."/>
            <person name="Cascon T."/>
            <person name="Hamberg M."/>
            <person name="Castresana C."/>
        </authorList>
    </citation>
    <scope>FUNCTION</scope>
    <scope>DISRUPTION PHENOTYPE</scope>
</reference>
<reference key="10">
    <citation type="journal article" date="2017" name="Plant Cell Physiol.">
        <title>Enzymatic and non-enzymatic mechanisms contribute to lipid oxidation during seed aging.</title>
        <authorList>
            <person name="Oenel A."/>
            <person name="Fekete A."/>
            <person name="Krischke M."/>
            <person name="Faul S.C."/>
            <person name="Gresser G."/>
            <person name="Havaux M."/>
            <person name="Mueller M.J."/>
            <person name="Berger S."/>
        </authorList>
    </citation>
    <scope>FUNCTION</scope>
</reference>
<gene>
    <name evidence="11" type="primary">LOX5</name>
    <name evidence="14" type="ordered locus">At3g22400</name>
    <name evidence="15" type="ORF">MCB17.13</name>
</gene>
<sequence>MIHTDIAEILCVKPKTTKKTKTMEEDVKKTTTMKIEGEVVVMKKNLLDFKDVMASLLDRVNELLGRRVSLHLISSHQPDPANEKRGRLGKAAHLEKWVTKIKTSVTAEETAFGVTFDWDESMGPPAAFVIKNHHHSQFYLKSLTLRGFPDGEGGATAIHFICNSWIYPNHRYRSDRVFFSNKAYLPSETPELIKELREEELKNLRGNEKGGEFKEWDRVYDYAYYNDLGAPDKGPDSVRPVLGGSPELPYPRRGKTGRKSTKSDPKSESRLALLNLNIYVPRDERFSHVKFSDFLAYALKSVTQVLVPEIASVCDKTINEFDSFEDVFHLYDGSIKLANGHTISKLRDVIPWEMFRELVRNDGERFLKYPLPDILKESRSAWRTDEEFAREMLAGLNPVVISRLQEFPPKSCLDSAKYGNQHSSIRTEHIESNMNGLNVQEALEQNKLYILDHHDALMPYLTRINSTNTKTYATRTLLLLQADGTLKPLAIELSLPHAQGESYGSVSKVFTPAEKGVEGSVWQLAKAYAAVNDSGYHQLISHWLQTHAVIEPFIIASNRQLSVVHPIHKLLHPHFRDTMNINALARHVLINSDGVLERTVFPSRYAMEMSSSIYKNWVFTEQALPKDLLKRGVAVEDPNSDNGVKLLIEDYPFAVDGLEIWSAIKTWVTEYCTFYYNNDKTVQTDTEIQSWWTELRTKGHGDKRHESWWPSMQTRDDLIETCTIIIWIASALHAAVNFGQYPYAGFLPNRPTVSRRFMPEPGTDEYAELEEDADVAFLKTITPQLQTLLGISIIEILSMHSTDEIYLGQRDSPNWTADDEPLEAFKRFGKELELIENNIIRRNNDKRFKNRTGPVNIPYTLLYPNTTDYTREGGITGKGIPNSVSI</sequence>
<comment type="function">
    <text evidence="4 5 6 8 9 10">9S-lipoxygenase that can use linoleic acid or linolenic acid as substrates. Plant lipoxygenases may be involved in a number of diverse aspects of plant physiology including growth and development, pest resistance, and senescence or responses to wounding. Catalyzes the hydroperoxidation of lipids containing a cis,cis-1,4-pentadiene structure. Function as regulators of root development by controlling the emergence of lateral roots (PubMed:17369372, PubMed:18949503). 9S-lypoxygenase-derived oxylipins may play an antagonistic role to ethylene signaling in the control of responses involving oxidative stress, lipid peroxidation and plant defense (PubMed:21481031). LOX5-derived oxylipins may facilitate performance of green peach aphid (Myzus persicae) on foliage (PubMed:21481031). 9S-lypoxygenase-derived oxylipins are engaged during infection to control the balance between salicylic acid (SA) and jasmonate (JA) signaling to facilitate infection by the fungal pathogen Fusarium graminearum (PubMed:26075826). 9S-lypoxygenase-derived oxylipins activate brassinosteroid signaling to promote cell wall-based defense and limit pathogen infection (PubMed:26417008). Does not seem to contribute to the oxidation of free fatty acids during seed aging (PubMed:28371855).</text>
</comment>
<comment type="catalytic activity">
    <reaction evidence="5">
        <text>(9Z,12Z)-octadecadienoate + O2 = (9S)-hydroperoxy-(10E,12Z)-octadecadienoate</text>
        <dbReference type="Rhea" id="RHEA:30291"/>
        <dbReference type="ChEBI" id="CHEBI:15379"/>
        <dbReference type="ChEBI" id="CHEBI:30245"/>
        <dbReference type="ChEBI" id="CHEBI:60955"/>
        <dbReference type="EC" id="1.13.11.58"/>
    </reaction>
    <physiologicalReaction direction="left-to-right" evidence="5">
        <dbReference type="Rhea" id="RHEA:30292"/>
    </physiologicalReaction>
</comment>
<comment type="catalytic activity">
    <reaction evidence="5">
        <text>(9Z,12Z,15Z)-octadecatrienoate + O2 = (9S)-hydroperoxy-(10E,12Z,15Z)-octadecatrienoate</text>
        <dbReference type="Rhea" id="RHEA:51248"/>
        <dbReference type="ChEBI" id="CHEBI:15379"/>
        <dbReference type="ChEBI" id="CHEBI:32387"/>
        <dbReference type="ChEBI" id="CHEBI:60962"/>
    </reaction>
    <physiologicalReaction direction="left-to-right" evidence="5">
        <dbReference type="Rhea" id="RHEA:51249"/>
    </physiologicalReaction>
</comment>
<comment type="cofactor">
    <cofactor evidence="2">
        <name>Fe cation</name>
        <dbReference type="ChEBI" id="CHEBI:24875"/>
    </cofactor>
    <text evidence="2">Binds 1 Fe cation per subunit.</text>
</comment>
<comment type="pathway">
    <text evidence="2">Lipid metabolism; oxylipin biosynthesis.</text>
</comment>
<comment type="tissue specificity">
    <text evidence="4">Expressed in roots.</text>
</comment>
<comment type="developmental stage">
    <text evidence="4">First observed in lateral root primordia (LRP), from the first pericycle divisions. Disappears before root emergence.</text>
</comment>
<comment type="induction">
    <text evidence="7 8">Induced by the green peach aphid (Myzus persicae) (PubMed:22474183). Induced by infection with the fungal pathogen Fusarium graminearum (PubMed:26075826).</text>
</comment>
<comment type="disruption phenotype">
    <text evidence="4 7 8 9">Increment in the number of lateral roots, and moderate increase in the length of the primary root (PubMed:17369372). Reduced performance of green peach aphid (Myzus persicae) on foliage (PubMed:22474183). Enhanced disease resistance to the fungal pathogen Fusarium graminearum (PubMed:26075826). The double mutant plants lox1 and lox5 exhibit enhanced susceptibility to the bacterial pathogen Pseudomonas syringae pv tomato DC3000 and the biotrophic powdery mildew pathogen Golovinomyces cichoracearum (PubMed:26417008).</text>
</comment>
<comment type="similarity">
    <text evidence="13">Belongs to the lipoxygenase family.</text>
</comment>
<comment type="sequence caution" evidence="13">
    <conflict type="erroneous gene model prediction">
        <sequence resource="EMBL-CDS" id="BAB01777"/>
    </conflict>
</comment>
<protein>
    <recommendedName>
        <fullName evidence="11">Linoleate 9S-lipoxygenase 5</fullName>
        <ecNumber evidence="5">1.13.11.58</ecNumber>
    </recommendedName>
    <alternativeName>
        <fullName evidence="11">Lipoxygenase 5</fullName>
        <shortName evidence="12">AtLOX5</shortName>
    </alternativeName>
</protein>
<accession>Q9LUW0</accession>
<accession>Q9FNX7</accession>
<proteinExistence type="evidence at protein level"/>